<name>PTFD_BACSU</name>
<organism>
    <name type="scientific">Bacillus subtilis (strain 168)</name>
    <dbReference type="NCBI Taxonomy" id="224308"/>
    <lineage>
        <taxon>Bacteria</taxon>
        <taxon>Bacillati</taxon>
        <taxon>Bacillota</taxon>
        <taxon>Bacilli</taxon>
        <taxon>Bacillales</taxon>
        <taxon>Bacillaceae</taxon>
        <taxon>Bacillus</taxon>
    </lineage>
</organism>
<dbReference type="EMBL" id="X56098">
    <property type="protein sequence ID" value="CAA39580.1"/>
    <property type="molecule type" value="Genomic_DNA"/>
</dbReference>
<dbReference type="EMBL" id="X92868">
    <property type="protein sequence ID" value="CAA63464.1"/>
    <property type="molecule type" value="Genomic_DNA"/>
</dbReference>
<dbReference type="EMBL" id="AL009126">
    <property type="protein sequence ID" value="CAB14646.1"/>
    <property type="molecule type" value="Genomic_DNA"/>
</dbReference>
<dbReference type="PIR" id="S11401">
    <property type="entry name" value="S11401"/>
</dbReference>
<dbReference type="RefSeq" id="NP_390582.1">
    <property type="nucleotide sequence ID" value="NC_000964.3"/>
</dbReference>
<dbReference type="RefSeq" id="WP_003229834.1">
    <property type="nucleotide sequence ID" value="NZ_OZ025638.1"/>
</dbReference>
<dbReference type="SMR" id="P26382"/>
<dbReference type="FunCoup" id="P26382">
    <property type="interactions" value="47"/>
</dbReference>
<dbReference type="STRING" id="224308.BSU27040"/>
<dbReference type="TCDB" id="4.A.6.1.2">
    <property type="family name" value="the pts mannose-fructose-sorbose (man) family"/>
</dbReference>
<dbReference type="PaxDb" id="224308-BSU27040"/>
<dbReference type="EnsemblBacteria" id="CAB14646">
    <property type="protein sequence ID" value="CAB14646"/>
    <property type="gene ID" value="BSU_27040"/>
</dbReference>
<dbReference type="GeneID" id="937595"/>
<dbReference type="KEGG" id="bsu:BSU27040"/>
<dbReference type="PATRIC" id="fig|224308.179.peg.2937"/>
<dbReference type="eggNOG" id="COG3716">
    <property type="taxonomic scope" value="Bacteria"/>
</dbReference>
<dbReference type="InParanoid" id="P26382"/>
<dbReference type="OrthoDB" id="9795582at2"/>
<dbReference type="PhylomeDB" id="P26382"/>
<dbReference type="BioCyc" id="BSUB:BSU27040-MONOMER"/>
<dbReference type="Proteomes" id="UP000001570">
    <property type="component" value="Chromosome"/>
</dbReference>
<dbReference type="GO" id="GO:0005886">
    <property type="term" value="C:plasma membrane"/>
    <property type="evidence" value="ECO:0000318"/>
    <property type="project" value="GO_Central"/>
</dbReference>
<dbReference type="GO" id="GO:0009401">
    <property type="term" value="P:phosphoenolpyruvate-dependent sugar phosphotransferase system"/>
    <property type="evidence" value="ECO:0000318"/>
    <property type="project" value="GO_Central"/>
</dbReference>
<dbReference type="InterPro" id="IPR050303">
    <property type="entry name" value="GatZ_KbaZ_carbometab"/>
</dbReference>
<dbReference type="InterPro" id="IPR004704">
    <property type="entry name" value="PTS_IID_man"/>
</dbReference>
<dbReference type="NCBIfam" id="TIGR00828">
    <property type="entry name" value="EIID-AGA"/>
    <property type="match status" value="1"/>
</dbReference>
<dbReference type="NCBIfam" id="NF008315">
    <property type="entry name" value="PRK11103.1"/>
    <property type="match status" value="1"/>
</dbReference>
<dbReference type="PANTHER" id="PTHR32502">
    <property type="entry name" value="N-ACETYLGALACTOSAMINE PERMEASE II COMPONENT-RELATED"/>
    <property type="match status" value="1"/>
</dbReference>
<dbReference type="PANTHER" id="PTHR32502:SF5">
    <property type="entry name" value="N-ACETYLGALACTOSAMINE PERMEASE IID COMPONENT-RELATED"/>
    <property type="match status" value="1"/>
</dbReference>
<dbReference type="Pfam" id="PF03613">
    <property type="entry name" value="EIID-AGA"/>
    <property type="match status" value="1"/>
</dbReference>
<dbReference type="PROSITE" id="PS51108">
    <property type="entry name" value="PTS_EIID"/>
    <property type="match status" value="1"/>
</dbReference>
<accession>P26382</accession>
<sequence>MEKEKRLTKKEIFSMFIRSNFLLGSFNFERVQAMGYCYVMIPAIKKLYGPGAKRNEALQRHLEWFNTHPWLTAPIFGVTAAMEEEMANNKGIDGKAISGMKIGLMGPIAGVGDPIFWGTIRPVLAALGASLALGGNIAGPLLFFFLLNAIRLSTKYYGLKYGYVKGMEILQDLAGNRIQKLTEGASILGLFVMGALVSKWTTINIPIVVSRIKDESGKVDVQTVQNVLDSIMPGALPLGLTLLVAWMLRKGVNPLLIICGIFVIGILGYWAGFLA</sequence>
<feature type="chain" id="PRO_0000186522" description="Fructose permease IID component">
    <location>
        <begin position="1"/>
        <end position="275"/>
    </location>
</feature>
<feature type="transmembrane region" description="Helical" evidence="1">
    <location>
        <begin position="100"/>
        <end position="120"/>
    </location>
</feature>
<feature type="transmembrane region" description="Helical" evidence="1">
    <location>
        <begin position="127"/>
        <end position="147"/>
    </location>
</feature>
<feature type="transmembrane region" description="Helical" evidence="1">
    <location>
        <begin position="187"/>
        <end position="207"/>
    </location>
</feature>
<feature type="transmembrane region" description="Helical" evidence="1">
    <location>
        <begin position="227"/>
        <end position="247"/>
    </location>
</feature>
<feature type="transmembrane region" description="Helical" evidence="1">
    <location>
        <begin position="255"/>
        <end position="275"/>
    </location>
</feature>
<feature type="domain" description="PTS EIID" evidence="1">
    <location>
        <begin position="5"/>
        <end position="274"/>
    </location>
</feature>
<reference key="1">
    <citation type="journal article" date="1990" name="J. Mol. Biol.">
        <title>Levanase operon of Bacillus subtilis includes a fructose-specific phosphotransferase system regulating the expression of the operon.</title>
        <authorList>
            <person name="Martin-Verstraete I."/>
            <person name="Debarbouille M."/>
            <person name="Klier A."/>
            <person name="Rapoport G."/>
        </authorList>
    </citation>
    <scope>NUCLEOTIDE SEQUENCE [GENOMIC DNA]</scope>
    <source>
        <strain>168</strain>
    </source>
</reference>
<reference key="2">
    <citation type="journal article" date="1997" name="Microbiology">
        <title>A 23911 bp region of the Bacillus subtilis genome comprising genes located upstream and downstream of the lev operon.</title>
        <authorList>
            <person name="Parro V."/>
            <person name="San Roman M."/>
            <person name="Galindo I."/>
            <person name="Purnelle B."/>
            <person name="Bolotin A."/>
            <person name="Sorokin A."/>
            <person name="Mellado R.P."/>
        </authorList>
    </citation>
    <scope>NUCLEOTIDE SEQUENCE [GENOMIC DNA]</scope>
    <source>
        <strain>168</strain>
    </source>
</reference>
<reference key="3">
    <citation type="journal article" date="1997" name="Nature">
        <title>The complete genome sequence of the Gram-positive bacterium Bacillus subtilis.</title>
        <authorList>
            <person name="Kunst F."/>
            <person name="Ogasawara N."/>
            <person name="Moszer I."/>
            <person name="Albertini A.M."/>
            <person name="Alloni G."/>
            <person name="Azevedo V."/>
            <person name="Bertero M.G."/>
            <person name="Bessieres P."/>
            <person name="Bolotin A."/>
            <person name="Borchert S."/>
            <person name="Borriss R."/>
            <person name="Boursier L."/>
            <person name="Brans A."/>
            <person name="Braun M."/>
            <person name="Brignell S.C."/>
            <person name="Bron S."/>
            <person name="Brouillet S."/>
            <person name="Bruschi C.V."/>
            <person name="Caldwell B."/>
            <person name="Capuano V."/>
            <person name="Carter N.M."/>
            <person name="Choi S.-K."/>
            <person name="Codani J.-J."/>
            <person name="Connerton I.F."/>
            <person name="Cummings N.J."/>
            <person name="Daniel R.A."/>
            <person name="Denizot F."/>
            <person name="Devine K.M."/>
            <person name="Duesterhoeft A."/>
            <person name="Ehrlich S.D."/>
            <person name="Emmerson P.T."/>
            <person name="Entian K.-D."/>
            <person name="Errington J."/>
            <person name="Fabret C."/>
            <person name="Ferrari E."/>
            <person name="Foulger D."/>
            <person name="Fritz C."/>
            <person name="Fujita M."/>
            <person name="Fujita Y."/>
            <person name="Fuma S."/>
            <person name="Galizzi A."/>
            <person name="Galleron N."/>
            <person name="Ghim S.-Y."/>
            <person name="Glaser P."/>
            <person name="Goffeau A."/>
            <person name="Golightly E.J."/>
            <person name="Grandi G."/>
            <person name="Guiseppi G."/>
            <person name="Guy B.J."/>
            <person name="Haga K."/>
            <person name="Haiech J."/>
            <person name="Harwood C.R."/>
            <person name="Henaut A."/>
            <person name="Hilbert H."/>
            <person name="Holsappel S."/>
            <person name="Hosono S."/>
            <person name="Hullo M.-F."/>
            <person name="Itaya M."/>
            <person name="Jones L.-M."/>
            <person name="Joris B."/>
            <person name="Karamata D."/>
            <person name="Kasahara Y."/>
            <person name="Klaerr-Blanchard M."/>
            <person name="Klein C."/>
            <person name="Kobayashi Y."/>
            <person name="Koetter P."/>
            <person name="Koningstein G."/>
            <person name="Krogh S."/>
            <person name="Kumano M."/>
            <person name="Kurita K."/>
            <person name="Lapidus A."/>
            <person name="Lardinois S."/>
            <person name="Lauber J."/>
            <person name="Lazarevic V."/>
            <person name="Lee S.-M."/>
            <person name="Levine A."/>
            <person name="Liu H."/>
            <person name="Masuda S."/>
            <person name="Mauel C."/>
            <person name="Medigue C."/>
            <person name="Medina N."/>
            <person name="Mellado R.P."/>
            <person name="Mizuno M."/>
            <person name="Moestl D."/>
            <person name="Nakai S."/>
            <person name="Noback M."/>
            <person name="Noone D."/>
            <person name="O'Reilly M."/>
            <person name="Ogawa K."/>
            <person name="Ogiwara A."/>
            <person name="Oudega B."/>
            <person name="Park S.-H."/>
            <person name="Parro V."/>
            <person name="Pohl T.M."/>
            <person name="Portetelle D."/>
            <person name="Porwollik S."/>
            <person name="Prescott A.M."/>
            <person name="Presecan E."/>
            <person name="Pujic P."/>
            <person name="Purnelle B."/>
            <person name="Rapoport G."/>
            <person name="Rey M."/>
            <person name="Reynolds S."/>
            <person name="Rieger M."/>
            <person name="Rivolta C."/>
            <person name="Rocha E."/>
            <person name="Roche B."/>
            <person name="Rose M."/>
            <person name="Sadaie Y."/>
            <person name="Sato T."/>
            <person name="Scanlan E."/>
            <person name="Schleich S."/>
            <person name="Schroeter R."/>
            <person name="Scoffone F."/>
            <person name="Sekiguchi J."/>
            <person name="Sekowska A."/>
            <person name="Seror S.J."/>
            <person name="Serror P."/>
            <person name="Shin B.-S."/>
            <person name="Soldo B."/>
            <person name="Sorokin A."/>
            <person name="Tacconi E."/>
            <person name="Takagi T."/>
            <person name="Takahashi H."/>
            <person name="Takemaru K."/>
            <person name="Takeuchi M."/>
            <person name="Tamakoshi A."/>
            <person name="Tanaka T."/>
            <person name="Terpstra P."/>
            <person name="Tognoni A."/>
            <person name="Tosato V."/>
            <person name="Uchiyama S."/>
            <person name="Vandenbol M."/>
            <person name="Vannier F."/>
            <person name="Vassarotti A."/>
            <person name="Viari A."/>
            <person name="Wambutt R."/>
            <person name="Wedler E."/>
            <person name="Wedler H."/>
            <person name="Weitzenegger T."/>
            <person name="Winters P."/>
            <person name="Wipat A."/>
            <person name="Yamamoto H."/>
            <person name="Yamane K."/>
            <person name="Yasumoto K."/>
            <person name="Yata K."/>
            <person name="Yoshida K."/>
            <person name="Yoshikawa H.-F."/>
            <person name="Zumstein E."/>
            <person name="Yoshikawa H."/>
            <person name="Danchin A."/>
        </authorList>
    </citation>
    <scope>NUCLEOTIDE SEQUENCE [LARGE SCALE GENOMIC DNA]</scope>
    <source>
        <strain>168</strain>
    </source>
</reference>
<evidence type="ECO:0000255" key="1">
    <source>
        <dbReference type="PROSITE-ProRule" id="PRU00431"/>
    </source>
</evidence>
<evidence type="ECO:0000305" key="2"/>
<proteinExistence type="predicted"/>
<protein>
    <recommendedName>
        <fullName>Fructose permease IID component</fullName>
    </recommendedName>
    <alternativeName>
        <fullName>EIID-Fru</fullName>
    </alternativeName>
    <alternativeName>
        <fullName>PTS system fructose-specific EIID component</fullName>
    </alternativeName>
    <alternativeName>
        <fullName>p30</fullName>
    </alternativeName>
</protein>
<comment type="function">
    <text>The phosphoenolpyruvate-dependent sugar phosphotransferase system (PTS), a major carbohydrate active -transport system, catalyzes the phosphorylation of incoming sugar substrates concomitant with their translocation across the cell membrane. This system is involved in fructose transport.</text>
</comment>
<comment type="subcellular location">
    <subcellularLocation>
        <location evidence="2">Cell membrane</location>
        <topology evidence="2">Multi-pass membrane protein</topology>
    </subcellularLocation>
</comment>
<comment type="domain">
    <text>The EIID domain, with its homologous EIIC domain, forms the PTS system translocation channel and contains part of its specific substrate-binding site.</text>
</comment>
<keyword id="KW-1003">Cell membrane</keyword>
<keyword id="KW-0472">Membrane</keyword>
<keyword id="KW-0598">Phosphotransferase system</keyword>
<keyword id="KW-1185">Reference proteome</keyword>
<keyword id="KW-0762">Sugar transport</keyword>
<keyword id="KW-0812">Transmembrane</keyword>
<keyword id="KW-1133">Transmembrane helix</keyword>
<keyword id="KW-0813">Transport</keyword>
<gene>
    <name type="primary">levG</name>
    <name type="ordered locus">BSU27040</name>
</gene>